<proteinExistence type="evidence at protein level"/>
<comment type="function">
    <text evidence="3">Exhibits M2 muscarinic acetylcholine receptor (CHRM2)-blocking activity, but has a weak binding activity toward nicotinic AChR. Moreover, it inhibits collagen-induced platelet aggregation.</text>
</comment>
<comment type="subcellular location">
    <subcellularLocation>
        <location evidence="2">Secreted</location>
    </subcellularLocation>
</comment>
<comment type="tissue specificity">
    <text evidence="5">Expressed by the venom gland.</text>
</comment>
<comment type="toxic dose">
    <text evidence="2">LD(50) is 0.15 mg/kg by intravenous injection into mice.</text>
</comment>
<comment type="similarity">
    <text evidence="5">Belongs to the three-finger toxin family. Ancestral subfamily. Orphan group V sub-subfamily.</text>
</comment>
<reference key="1">
    <citation type="journal article" date="1998" name="Biochem. Mol. Biol. Int.">
        <title>cDNA cloning and sequence analysis of six neurotoxin-like proteins from Chinese continental banded krait.</title>
        <authorList>
            <person name="Qian Y.-C."/>
            <person name="Fan C.-Y."/>
            <person name="Gong Y."/>
            <person name="Yang S.-L."/>
        </authorList>
    </citation>
    <scope>NUCLEOTIDE SEQUENCE [MRNA]</scope>
    <source>
        <tissue>Venom gland</tissue>
    </source>
</reference>
<reference key="2">
    <citation type="submission" date="1999-04" db="EMBL/GenBank/DDBJ databases">
        <authorList>
            <person name="Cai Q."/>
            <person name="He Z."/>
            <person name="Gong Y."/>
            <person name="Yang S."/>
        </authorList>
    </citation>
    <scope>NUCLEOTIDE SEQUENCE [MRNA]</scope>
    <source>
        <tissue>Venom gland</tissue>
    </source>
</reference>
<reference key="3">
    <citation type="journal article" date="2002" name="J. Protein Chem.">
        <title>Characterization and gene organization of Taiwan banded krait (Bungarus multicinctus) gamma-bungarotoxin.</title>
        <authorList>
            <person name="Chang L.-S."/>
            <person name="Chung C."/>
            <person name="Wu B.-N."/>
            <person name="Yang C.-C."/>
        </authorList>
    </citation>
    <scope>NUCLEOTIDE SEQUENCE [GENOMIC DNA]</scope>
    <scope>FUNCTION</scope>
    <source>
        <tissue>Liver</tissue>
    </source>
</reference>
<reference key="4">
    <citation type="journal article" date="1999" name="Toxicon">
        <title>Primary structure of gamma-bungarotoxin, a new postsynaptic neurotoxin from venom of Bungarus multicinctus.</title>
        <authorList>
            <person name="Aird S.D."/>
            <person name="Womble G.C."/>
            <person name="Yates J.R. III"/>
            <person name="Griffin P.R."/>
        </authorList>
    </citation>
    <scope>PROTEIN SEQUENCE OF 22-89</scope>
    <scope>TOXIC DOSE</scope>
    <scope>SUBCELLULAR LOCATION</scope>
    <source>
        <tissue>Venom</tissue>
    </source>
</reference>
<reference key="5">
    <citation type="journal article" date="2004" name="Proteins">
        <title>Solution structure of gamma-bungarotoxin: the functional significance of amino acid residues flanking the RGD motif in integrin binding.</title>
        <authorList>
            <person name="Shiu J.-H."/>
            <person name="Chen C.-Y."/>
            <person name="Chang L.-S."/>
            <person name="Chen Y.-C."/>
            <person name="Chen Y.-C."/>
            <person name="Lo Y.-H."/>
            <person name="Liu Y.-C."/>
            <person name="Chuang W.-J."/>
        </authorList>
    </citation>
    <scope>STRUCTURE BY NMR OF 22-89</scope>
    <scope>DISULFIDE BOND</scope>
</reference>
<evidence type="ECO:0000255" key="1">
    <source>
        <dbReference type="PROSITE-ProRule" id="PRU00293"/>
    </source>
</evidence>
<evidence type="ECO:0000269" key="2">
    <source>
    </source>
</evidence>
<evidence type="ECO:0000269" key="3">
    <source>
    </source>
</evidence>
<evidence type="ECO:0000269" key="4">
    <source>
    </source>
</evidence>
<evidence type="ECO:0000305" key="5"/>
<evidence type="ECO:0000312" key="6">
    <source>
        <dbReference type="PDB" id="1MR6"/>
    </source>
</evidence>
<evidence type="ECO:0007829" key="7">
    <source>
        <dbReference type="PDB" id="1MR6"/>
    </source>
</evidence>
<feature type="signal peptide" evidence="2">
    <location>
        <begin position="1"/>
        <end position="21"/>
    </location>
</feature>
<feature type="chain" id="PRO_0000035425" description="Gamma-bungarotoxin" evidence="2">
    <location>
        <begin position="22"/>
        <end position="89"/>
    </location>
</feature>
<feature type="short sequence motif" description="Cell attachment site" evidence="1">
    <location>
        <begin position="54"/>
        <end position="56"/>
    </location>
</feature>
<feature type="disulfide bond" evidence="4 6">
    <location>
        <begin position="24"/>
        <end position="45"/>
    </location>
</feature>
<feature type="disulfide bond" evidence="4 6">
    <location>
        <begin position="27"/>
        <end position="32"/>
    </location>
</feature>
<feature type="disulfide bond" evidence="4 6">
    <location>
        <begin position="38"/>
        <end position="66"/>
    </location>
</feature>
<feature type="disulfide bond" evidence="4 6">
    <location>
        <begin position="70"/>
        <end position="81"/>
    </location>
</feature>
<feature type="disulfide bond" evidence="4 6">
    <location>
        <begin position="82"/>
        <end position="87"/>
    </location>
</feature>
<feature type="sequence conflict" description="In Ref. 2; AAD41806." evidence="5" ref="2">
    <original>K</original>
    <variation>E</variation>
    <location>
        <position position="2"/>
    </location>
</feature>
<feature type="strand" evidence="7">
    <location>
        <begin position="28"/>
        <end position="30"/>
    </location>
</feature>
<feature type="strand" evidence="7">
    <location>
        <begin position="45"/>
        <end position="48"/>
    </location>
</feature>
<feature type="strand" evidence="7">
    <location>
        <begin position="54"/>
        <end position="56"/>
    </location>
</feature>
<feature type="strand" evidence="7">
    <location>
        <begin position="63"/>
        <end position="66"/>
    </location>
</feature>
<feature type="strand" evidence="7">
    <location>
        <begin position="68"/>
        <end position="72"/>
    </location>
</feature>
<feature type="strand" evidence="7">
    <location>
        <begin position="75"/>
        <end position="77"/>
    </location>
</feature>
<feature type="strand" evidence="7">
    <location>
        <begin position="82"/>
        <end position="86"/>
    </location>
</feature>
<organism>
    <name type="scientific">Bungarus multicinctus</name>
    <name type="common">Many-banded krait</name>
    <dbReference type="NCBI Taxonomy" id="8616"/>
    <lineage>
        <taxon>Eukaryota</taxon>
        <taxon>Metazoa</taxon>
        <taxon>Chordata</taxon>
        <taxon>Craniata</taxon>
        <taxon>Vertebrata</taxon>
        <taxon>Euteleostomi</taxon>
        <taxon>Lepidosauria</taxon>
        <taxon>Squamata</taxon>
        <taxon>Bifurcata</taxon>
        <taxon>Unidentata</taxon>
        <taxon>Episquamata</taxon>
        <taxon>Toxicofera</taxon>
        <taxon>Serpentes</taxon>
        <taxon>Colubroidea</taxon>
        <taxon>Elapidae</taxon>
        <taxon>Bungarinae</taxon>
        <taxon>Bungarus</taxon>
    </lineage>
</organism>
<name>3NO5I_BUNMU</name>
<dbReference type="EMBL" id="AJ006135">
    <property type="protein sequence ID" value="CAA06885.1"/>
    <property type="molecule type" value="mRNA"/>
</dbReference>
<dbReference type="EMBL" id="AF142324">
    <property type="protein sequence ID" value="AAD41806.1"/>
    <property type="molecule type" value="mRNA"/>
</dbReference>
<dbReference type="EMBL" id="AJ416991">
    <property type="protein sequence ID" value="CAD01082.1"/>
    <property type="molecule type" value="Genomic_DNA"/>
</dbReference>
<dbReference type="PIR" id="A59187">
    <property type="entry name" value="A59187"/>
</dbReference>
<dbReference type="PDB" id="1MR6">
    <property type="method" value="NMR"/>
    <property type="chains" value="A=22-89"/>
</dbReference>
<dbReference type="PDBsum" id="1MR6"/>
<dbReference type="SMR" id="Q9YGJ0"/>
<dbReference type="EvolutionaryTrace" id="Q9YGJ0"/>
<dbReference type="GO" id="GO:0005576">
    <property type="term" value="C:extracellular region"/>
    <property type="evidence" value="ECO:0007669"/>
    <property type="project" value="UniProtKB-SubCell"/>
</dbReference>
<dbReference type="GO" id="GO:0090729">
    <property type="term" value="F:toxin activity"/>
    <property type="evidence" value="ECO:0007669"/>
    <property type="project" value="UniProtKB-KW"/>
</dbReference>
<dbReference type="CDD" id="cd00206">
    <property type="entry name" value="TFP_snake_toxin"/>
    <property type="match status" value="1"/>
</dbReference>
<dbReference type="FunFam" id="2.10.60.10:FF:000024">
    <property type="entry name" value="Cytotoxin 1"/>
    <property type="match status" value="1"/>
</dbReference>
<dbReference type="Gene3D" id="2.10.60.10">
    <property type="entry name" value="CD59"/>
    <property type="match status" value="1"/>
</dbReference>
<dbReference type="InterPro" id="IPR003571">
    <property type="entry name" value="Snake_3FTx"/>
</dbReference>
<dbReference type="InterPro" id="IPR045860">
    <property type="entry name" value="Snake_toxin-like_sf"/>
</dbReference>
<dbReference type="InterPro" id="IPR054131">
    <property type="entry name" value="Toxin_cobra-type"/>
</dbReference>
<dbReference type="Pfam" id="PF21947">
    <property type="entry name" value="Toxin_cobra-type"/>
    <property type="match status" value="1"/>
</dbReference>
<dbReference type="SUPFAM" id="SSF57302">
    <property type="entry name" value="Snake toxin-like"/>
    <property type="match status" value="1"/>
</dbReference>
<keyword id="KW-0002">3D-structure</keyword>
<keyword id="KW-1217">Cell adhesion impairing toxin</keyword>
<keyword id="KW-0903">Direct protein sequencing</keyword>
<keyword id="KW-1015">Disulfide bond</keyword>
<keyword id="KW-1214">G-protein coupled acetylcholine receptor impairing toxin</keyword>
<keyword id="KW-1213">G-protein coupled receptor impairing toxin</keyword>
<keyword id="KW-1199">Hemostasis impairing toxin</keyword>
<keyword id="KW-0528">Neurotoxin</keyword>
<keyword id="KW-1201">Platelet aggregation inhibiting toxin</keyword>
<keyword id="KW-0964">Secreted</keyword>
<keyword id="KW-0732">Signal</keyword>
<keyword id="KW-0800">Toxin</keyword>
<protein>
    <recommendedName>
        <fullName>Gamma-bungarotoxin</fullName>
    </recommendedName>
    <alternativeName>
        <fullName>Long neurotoxin homolog NTL2I</fullName>
    </alternativeName>
</protein>
<sequence>MKTLLLTLVVVTIVCLDLGYTMQCKTCSFYTCPNSETCPDGKNICVKRSWTAVRGDGPKREIRRECAATCPPSKLGLTVFCCTTDNCNH</sequence>
<accession>Q9YGJ0</accession>
<accession>Q9W796</accession>